<feature type="chain" id="PRO_1000138468" description="Cell division protein SepF">
    <location>
        <begin position="1"/>
        <end position="163"/>
    </location>
</feature>
<feature type="region of interest" description="Disordered" evidence="2">
    <location>
        <begin position="25"/>
        <end position="53"/>
    </location>
</feature>
<feature type="compositionally biased region" description="Basic and acidic residues" evidence="2">
    <location>
        <begin position="30"/>
        <end position="51"/>
    </location>
</feature>
<name>SEPF_HELMI</name>
<organism>
    <name type="scientific">Heliobacterium modesticaldum (strain ATCC 51547 / Ice1)</name>
    <dbReference type="NCBI Taxonomy" id="498761"/>
    <lineage>
        <taxon>Bacteria</taxon>
        <taxon>Bacillati</taxon>
        <taxon>Bacillota</taxon>
        <taxon>Clostridia</taxon>
        <taxon>Eubacteriales</taxon>
        <taxon>Heliobacteriaceae</taxon>
        <taxon>Heliomicrobium</taxon>
    </lineage>
</organism>
<accession>B0TGN6</accession>
<evidence type="ECO:0000255" key="1">
    <source>
        <dbReference type="HAMAP-Rule" id="MF_01197"/>
    </source>
</evidence>
<evidence type="ECO:0000256" key="2">
    <source>
        <dbReference type="SAM" id="MobiDB-lite"/>
    </source>
</evidence>
<dbReference type="EMBL" id="CP000930">
    <property type="protein sequence ID" value="ABZ84647.1"/>
    <property type="molecule type" value="Genomic_DNA"/>
</dbReference>
<dbReference type="RefSeq" id="WP_012283147.1">
    <property type="nucleotide sequence ID" value="NC_010337.2"/>
</dbReference>
<dbReference type="SMR" id="B0TGN6"/>
<dbReference type="STRING" id="498761.HM1_2090"/>
<dbReference type="KEGG" id="hmo:HM1_2090"/>
<dbReference type="eggNOG" id="COG1799">
    <property type="taxonomic scope" value="Bacteria"/>
</dbReference>
<dbReference type="HOGENOM" id="CLU_078499_4_0_9"/>
<dbReference type="OrthoDB" id="9815206at2"/>
<dbReference type="Proteomes" id="UP000008550">
    <property type="component" value="Chromosome"/>
</dbReference>
<dbReference type="GO" id="GO:0005737">
    <property type="term" value="C:cytoplasm"/>
    <property type="evidence" value="ECO:0007669"/>
    <property type="project" value="UniProtKB-SubCell"/>
</dbReference>
<dbReference type="GO" id="GO:0000917">
    <property type="term" value="P:division septum assembly"/>
    <property type="evidence" value="ECO:0007669"/>
    <property type="project" value="UniProtKB-KW"/>
</dbReference>
<dbReference type="GO" id="GO:0043093">
    <property type="term" value="P:FtsZ-dependent cytokinesis"/>
    <property type="evidence" value="ECO:0007669"/>
    <property type="project" value="UniProtKB-UniRule"/>
</dbReference>
<dbReference type="Gene3D" id="3.30.110.150">
    <property type="entry name" value="SepF-like protein"/>
    <property type="match status" value="1"/>
</dbReference>
<dbReference type="HAMAP" id="MF_01197">
    <property type="entry name" value="SepF"/>
    <property type="match status" value="1"/>
</dbReference>
<dbReference type="InterPro" id="IPR023052">
    <property type="entry name" value="Cell_div_SepF"/>
</dbReference>
<dbReference type="InterPro" id="IPR007561">
    <property type="entry name" value="Cell_div_SepF/SepF-rel"/>
</dbReference>
<dbReference type="InterPro" id="IPR038594">
    <property type="entry name" value="SepF-like_sf"/>
</dbReference>
<dbReference type="PANTHER" id="PTHR35798">
    <property type="entry name" value="CELL DIVISION PROTEIN SEPF"/>
    <property type="match status" value="1"/>
</dbReference>
<dbReference type="PANTHER" id="PTHR35798:SF1">
    <property type="entry name" value="CELL DIVISION PROTEIN SEPF"/>
    <property type="match status" value="1"/>
</dbReference>
<dbReference type="Pfam" id="PF04472">
    <property type="entry name" value="SepF"/>
    <property type="match status" value="1"/>
</dbReference>
<reference key="1">
    <citation type="journal article" date="2008" name="J. Bacteriol.">
        <title>The genome of Heliobacterium modesticaldum, a phototrophic representative of the Firmicutes containing the simplest photosynthetic apparatus.</title>
        <authorList>
            <person name="Sattley W.M."/>
            <person name="Madigan M.T."/>
            <person name="Swingley W.D."/>
            <person name="Cheung P.C."/>
            <person name="Clocksin K.M."/>
            <person name="Conrad A.L."/>
            <person name="Dejesa L.C."/>
            <person name="Honchak B.M."/>
            <person name="Jung D.O."/>
            <person name="Karbach L.E."/>
            <person name="Kurdoglu A."/>
            <person name="Lahiri S."/>
            <person name="Mastrian S.D."/>
            <person name="Page L.E."/>
            <person name="Taylor H.L."/>
            <person name="Wang Z.T."/>
            <person name="Raymond J."/>
            <person name="Chen M."/>
            <person name="Blankenship R.E."/>
            <person name="Touchman J.W."/>
        </authorList>
    </citation>
    <scope>NUCLEOTIDE SEQUENCE [LARGE SCALE GENOMIC DNA]</scope>
    <source>
        <strain>ATCC 51547 / Ice1</strain>
    </source>
</reference>
<gene>
    <name evidence="1" type="primary">sepF</name>
    <name type="ordered locus">Helmi_20220</name>
    <name type="ORF">HM1_2090</name>
</gene>
<protein>
    <recommendedName>
        <fullName evidence="1">Cell division protein SepF</fullName>
    </recommendedName>
</protein>
<comment type="function">
    <text evidence="1">Cell division protein that is part of the divisome complex and is recruited early to the Z-ring. Probably stimulates Z-ring formation, perhaps through the cross-linking of FtsZ protofilaments. Its function overlaps with FtsA.</text>
</comment>
<comment type="subunit">
    <text evidence="1">Homodimer. Interacts with FtsZ.</text>
</comment>
<comment type="subcellular location">
    <subcellularLocation>
        <location evidence="1">Cytoplasm</location>
    </subcellularLocation>
    <text evidence="1">Localizes to the division site, in a FtsZ-dependent manner.</text>
</comment>
<comment type="similarity">
    <text evidence="1">Belongs to the SepF family.</text>
</comment>
<keyword id="KW-0131">Cell cycle</keyword>
<keyword id="KW-0132">Cell division</keyword>
<keyword id="KW-0963">Cytoplasm</keyword>
<keyword id="KW-1185">Reference proteome</keyword>
<keyword id="KW-0717">Septation</keyword>
<proteinExistence type="inferred from homology"/>
<sequence length="163" mass="18056">MAKLVEKFYSIMGLGDEIEEMNDASVAPHSGEERESAFSRRSAERAERTERPTAPVVSLVTERQKKELKVVVCEPKTFDEARAIADHLKNRRQVILNLEKADREMAQRVIDFISGTTYALNGSMQKVGANIFVFAPSNVDISGEVTGDDLSSVRSPLAWANKG</sequence>